<dbReference type="EC" id="3.1.-.-" evidence="1"/>
<dbReference type="EMBL" id="CP000003">
    <property type="protein sequence ID" value="AAT86746.1"/>
    <property type="molecule type" value="Genomic_DNA"/>
</dbReference>
<dbReference type="RefSeq" id="WP_011184367.1">
    <property type="nucleotide sequence ID" value="NC_006086.1"/>
</dbReference>
<dbReference type="SMR" id="Q5XCW7"/>
<dbReference type="KEGG" id="spa:M6_Spy0611"/>
<dbReference type="HOGENOM" id="CLU_007838_1_0_9"/>
<dbReference type="Proteomes" id="UP000001167">
    <property type="component" value="Chromosome"/>
</dbReference>
<dbReference type="GO" id="GO:0008409">
    <property type="term" value="F:5'-3' exonuclease activity"/>
    <property type="evidence" value="ECO:0007669"/>
    <property type="project" value="UniProtKB-UniRule"/>
</dbReference>
<dbReference type="GO" id="GO:0005524">
    <property type="term" value="F:ATP binding"/>
    <property type="evidence" value="ECO:0007669"/>
    <property type="project" value="UniProtKB-UniRule"/>
</dbReference>
<dbReference type="GO" id="GO:0003690">
    <property type="term" value="F:double-stranded DNA binding"/>
    <property type="evidence" value="ECO:0007669"/>
    <property type="project" value="UniProtKB-UniRule"/>
</dbReference>
<dbReference type="GO" id="GO:0004386">
    <property type="term" value="F:helicase activity"/>
    <property type="evidence" value="ECO:0007669"/>
    <property type="project" value="UniProtKB-KW"/>
</dbReference>
<dbReference type="GO" id="GO:0016817">
    <property type="term" value="F:hydrolase activity, acting on acid anhydrides"/>
    <property type="evidence" value="ECO:0007669"/>
    <property type="project" value="InterPro"/>
</dbReference>
<dbReference type="GO" id="GO:0000724">
    <property type="term" value="P:double-strand break repair via homologous recombination"/>
    <property type="evidence" value="ECO:0007669"/>
    <property type="project" value="UniProtKB-UniRule"/>
</dbReference>
<dbReference type="Gene3D" id="3.90.320.10">
    <property type="match status" value="1"/>
</dbReference>
<dbReference type="Gene3D" id="3.40.50.300">
    <property type="entry name" value="P-loop containing nucleotide triphosphate hydrolases"/>
    <property type="match status" value="3"/>
</dbReference>
<dbReference type="HAMAP" id="MF_01453">
    <property type="entry name" value="AddB_type2"/>
    <property type="match status" value="1"/>
</dbReference>
<dbReference type="InterPro" id="IPR049035">
    <property type="entry name" value="ADDB_N"/>
</dbReference>
<dbReference type="InterPro" id="IPR014141">
    <property type="entry name" value="DNA_helicase_suRexB"/>
</dbReference>
<dbReference type="InterPro" id="IPR027417">
    <property type="entry name" value="P-loop_NTPase"/>
</dbReference>
<dbReference type="InterPro" id="IPR011604">
    <property type="entry name" value="PDDEXK-like_dom_sf"/>
</dbReference>
<dbReference type="InterPro" id="IPR038726">
    <property type="entry name" value="PDDEXK_AddAB-type"/>
</dbReference>
<dbReference type="InterPro" id="IPR011335">
    <property type="entry name" value="Restrct_endonuc-II-like"/>
</dbReference>
<dbReference type="NCBIfam" id="TIGR02774">
    <property type="entry name" value="rexB_recomb"/>
    <property type="match status" value="1"/>
</dbReference>
<dbReference type="PANTHER" id="PTHR30591">
    <property type="entry name" value="RECBCD ENZYME SUBUNIT RECC"/>
    <property type="match status" value="1"/>
</dbReference>
<dbReference type="PANTHER" id="PTHR30591:SF1">
    <property type="entry name" value="RECBCD ENZYME SUBUNIT RECC"/>
    <property type="match status" value="1"/>
</dbReference>
<dbReference type="Pfam" id="PF21445">
    <property type="entry name" value="ADDB_N"/>
    <property type="match status" value="1"/>
</dbReference>
<dbReference type="Pfam" id="PF12705">
    <property type="entry name" value="PDDEXK_1"/>
    <property type="match status" value="1"/>
</dbReference>
<dbReference type="SUPFAM" id="SSF52540">
    <property type="entry name" value="P-loop containing nucleoside triphosphate hydrolases"/>
    <property type="match status" value="1"/>
</dbReference>
<dbReference type="SUPFAM" id="SSF52980">
    <property type="entry name" value="Restriction endonuclease-like"/>
    <property type="match status" value="1"/>
</dbReference>
<sequence length="1071" mass="124178">MKLIYTEMSYSMTEILVNEARKAADQGYRVFYIAPNSLSFEKEREVLTLLPERGTFSIIVTRFVQMSRYFTVESSPSKQHLDDTTLAMIFYRALMQLKPEDLPSYGRLQNNSVFIEQLVELYKELKNAQLSVHDLTGLDHPQKQEDLIKIIELAETIMIQQDYNQDSPLQSFARAIKLGLLNNQLSKTVVVIDGFSRFSAEEDYLLSLLNNNCQEVITGSYVSQKAYQKSFIKGNIYEASLHFLQDLAQKYHIKPVFATSNQVFKPAFSRLTQLFEATHDFSQVDWQLQKNDLDHFSLWQCHHQKEEIEHVAKSIRQKLYEGYRYKDILVLLGDMDAYQLQIGPIFDKFEIPYYLGKAEPMAAHPLVQFIESLERSQRYNWRREDILNMLKSGLFGCFDDSDIDRFEEYTQFADIKGFTKFSKPFTINSSRQYPLDFLNEMRQDIVLPLQELFKSQKQLGASLVDKLILFLKKIRLAENMQGLAQSQLEVEKNEEVWKRFTDILTSFHHIFGQEKLRLSDCLALIKTGMKSAQYRVVPATLDVVTIKSYDLVQPHSKPFVYAIGLTQSHFPKQIHHSGLLSDQERARINEIRNYRHFDIASAENSKKNHQTALSLFNAATKELVLSVPTVINETFDDLSPYLKELINFGLPLLDKGKNYLSYDNSDIGNYKALLSQIIAINRQDLIEMSDQDKMFWTVVLRYLRKQLRKQQLELPTSDYRLSTKSLSKEVIEVCFPKGIPLKLSATALTVFYNNQYNYFLKYVLNLNKTESIHPDSRIHGQYLHRVFERLMKDHTQEPFDNKLKQAIYHTNQESFFQQVYQDNAEAEYSLAILEDIVRSTAPILQLNQNIKVIDQEKNFHLDMGNEILVHGIIDRIDQLSDGSLGVVDYKSSANQFDIGTFYNGLSPQLVTYLAALKQIAPHDINQLFGAMYLHLQDPKLDLVTFKQIDNTLVESIYKALTYKGIFSEVEKEHLSTGAYQTKNALYSNDELETLLNYNKYLYLKAVKHIKKGHFLINPYTSDGKTVQGDQLKAITRFEADLDMAQARRLVTLPAKEKKECFLTLMRKESHL</sequence>
<reference key="1">
    <citation type="journal article" date="2004" name="J. Infect. Dis.">
        <title>Progress toward characterization of the group A Streptococcus metagenome: complete genome sequence of a macrolide-resistant serotype M6 strain.</title>
        <authorList>
            <person name="Banks D.J."/>
            <person name="Porcella S.F."/>
            <person name="Barbian K.D."/>
            <person name="Beres S.B."/>
            <person name="Philips L.E."/>
            <person name="Voyich J.M."/>
            <person name="DeLeo F.R."/>
            <person name="Martin J.M."/>
            <person name="Somerville G.A."/>
            <person name="Musser J.M."/>
        </authorList>
    </citation>
    <scope>NUCLEOTIDE SEQUENCE [LARGE SCALE GENOMIC DNA]</scope>
    <source>
        <strain>ATCC BAA-946 / MGAS10394</strain>
    </source>
</reference>
<organism>
    <name type="scientific">Streptococcus pyogenes serotype M6 (strain ATCC BAA-946 / MGAS10394)</name>
    <dbReference type="NCBI Taxonomy" id="286636"/>
    <lineage>
        <taxon>Bacteria</taxon>
        <taxon>Bacillati</taxon>
        <taxon>Bacillota</taxon>
        <taxon>Bacilli</taxon>
        <taxon>Lactobacillales</taxon>
        <taxon>Streptococcaceae</taxon>
        <taxon>Streptococcus</taxon>
    </lineage>
</organism>
<protein>
    <recommendedName>
        <fullName evidence="1">ATP-dependent helicase/deoxyribonuclease subunit B</fullName>
        <ecNumber evidence="1">3.1.-.-</ecNumber>
    </recommendedName>
    <alternativeName>
        <fullName evidence="1">ATP-dependent helicase/nuclease subunit RexB</fullName>
    </alternativeName>
</protein>
<feature type="chain" id="PRO_0000379411" description="ATP-dependent helicase/deoxyribonuclease subunit B">
    <location>
        <begin position="1"/>
        <end position="1071"/>
    </location>
</feature>
<proteinExistence type="inferred from homology"/>
<evidence type="ECO:0000255" key="1">
    <source>
        <dbReference type="HAMAP-Rule" id="MF_01453"/>
    </source>
</evidence>
<accession>Q5XCW7</accession>
<keyword id="KW-0067">ATP-binding</keyword>
<keyword id="KW-0227">DNA damage</keyword>
<keyword id="KW-0234">DNA repair</keyword>
<keyword id="KW-0238">DNA-binding</keyword>
<keyword id="KW-0269">Exonuclease</keyword>
<keyword id="KW-0347">Helicase</keyword>
<keyword id="KW-0378">Hydrolase</keyword>
<keyword id="KW-0540">Nuclease</keyword>
<keyword id="KW-0547">Nucleotide-binding</keyword>
<name>ADDB_STRP6</name>
<comment type="function">
    <text evidence="1">The heterodimer acts as both an ATP-dependent DNA helicase and an ATP-dependent, dual-direction single-stranded exonuclease. Recognizes the chi site generating a DNA molecule suitable for the initiation of homologous recombination. This subunit has 5' -&gt; 3' nuclease activity but not helicase activity.</text>
</comment>
<comment type="cofactor">
    <cofactor evidence="1">
        <name>Mg(2+)</name>
        <dbReference type="ChEBI" id="CHEBI:18420"/>
    </cofactor>
</comment>
<comment type="subunit">
    <text evidence="1">Heterodimer of AddA and RexB.</text>
</comment>
<comment type="miscellaneous">
    <text evidence="1">Despite having helicase-like domains, this subunit does not have helicase activity.</text>
</comment>
<comment type="similarity">
    <text evidence="1">Belongs to the helicase family. AddB/RexB type 2 subfamily.</text>
</comment>
<gene>
    <name evidence="1" type="primary">rexB</name>
    <name type="ordered locus">M6_Spy0611</name>
</gene>